<protein>
    <recommendedName>
        <fullName evidence="4">Collagen alpha-2(I) chain</fullName>
    </recommendedName>
    <alternativeName>
        <fullName evidence="1">Alpha-2 type I collagen</fullName>
    </alternativeName>
</protein>
<accession>C0HLJ0</accession>
<feature type="chain" id="PRO_0000448457" description="Collagen alpha-2(I) chain">
    <location>
        <begin position="1"/>
        <end position="1011"/>
    </location>
</feature>
<feature type="region of interest" description="Disordered" evidence="2">
    <location>
        <begin position="1"/>
        <end position="1011"/>
    </location>
</feature>
<feature type="compositionally biased region" description="Low complexity" evidence="2">
    <location>
        <begin position="28"/>
        <end position="67"/>
    </location>
</feature>
<feature type="compositionally biased region" description="Low complexity" evidence="2">
    <location>
        <begin position="167"/>
        <end position="182"/>
    </location>
</feature>
<feature type="compositionally biased region" description="Gly residues" evidence="2">
    <location>
        <begin position="282"/>
        <end position="291"/>
    </location>
</feature>
<feature type="compositionally biased region" description="Low complexity" evidence="2">
    <location>
        <begin position="292"/>
        <end position="302"/>
    </location>
</feature>
<feature type="compositionally biased region" description="Gly residues" evidence="2">
    <location>
        <begin position="323"/>
        <end position="332"/>
    </location>
</feature>
<feature type="compositionally biased region" description="Low complexity" evidence="2">
    <location>
        <begin position="345"/>
        <end position="361"/>
    </location>
</feature>
<feature type="compositionally biased region" description="Low complexity" evidence="2">
    <location>
        <begin position="396"/>
        <end position="415"/>
    </location>
</feature>
<feature type="compositionally biased region" description="Gly residues" evidence="2">
    <location>
        <begin position="464"/>
        <end position="473"/>
    </location>
</feature>
<feature type="compositionally biased region" description="Low complexity" evidence="2">
    <location>
        <begin position="520"/>
        <end position="537"/>
    </location>
</feature>
<feature type="compositionally biased region" description="Low complexity" evidence="2">
    <location>
        <begin position="549"/>
        <end position="559"/>
    </location>
</feature>
<feature type="compositionally biased region" description="Gly residues" evidence="2">
    <location>
        <begin position="560"/>
        <end position="578"/>
    </location>
</feature>
<feature type="compositionally biased region" description="Low complexity" evidence="2">
    <location>
        <begin position="588"/>
        <end position="635"/>
    </location>
</feature>
<feature type="compositionally biased region" description="Low complexity" evidence="2">
    <location>
        <begin position="642"/>
        <end position="662"/>
    </location>
</feature>
<feature type="compositionally biased region" description="Basic and acidic residues" evidence="2">
    <location>
        <begin position="663"/>
        <end position="672"/>
    </location>
</feature>
<feature type="compositionally biased region" description="Low complexity" evidence="2">
    <location>
        <begin position="680"/>
        <end position="690"/>
    </location>
</feature>
<feature type="compositionally biased region" description="Gly residues" evidence="2">
    <location>
        <begin position="700"/>
        <end position="709"/>
    </location>
</feature>
<feature type="compositionally biased region" description="Low complexity" evidence="2">
    <location>
        <begin position="711"/>
        <end position="720"/>
    </location>
</feature>
<feature type="compositionally biased region" description="Gly residues" evidence="2">
    <location>
        <begin position="757"/>
        <end position="766"/>
    </location>
</feature>
<feature type="compositionally biased region" description="Low complexity" evidence="2">
    <location>
        <begin position="774"/>
        <end position="801"/>
    </location>
</feature>
<feature type="compositionally biased region" description="Low complexity" evidence="2">
    <location>
        <begin position="809"/>
        <end position="819"/>
    </location>
</feature>
<feature type="compositionally biased region" description="Gly residues" evidence="2">
    <location>
        <begin position="820"/>
        <end position="834"/>
    </location>
</feature>
<feature type="compositionally biased region" description="Low complexity" evidence="2">
    <location>
        <begin position="843"/>
        <end position="856"/>
    </location>
</feature>
<feature type="compositionally biased region" description="Low complexity" evidence="2">
    <location>
        <begin position="872"/>
        <end position="887"/>
    </location>
</feature>
<feature type="compositionally biased region" description="Basic and acidic residues" evidence="2">
    <location>
        <begin position="897"/>
        <end position="908"/>
    </location>
</feature>
<feature type="compositionally biased region" description="Pro residues" evidence="2">
    <location>
        <begin position="981"/>
        <end position="993"/>
    </location>
</feature>
<feature type="modified residue" description="4-hydroxyproline" evidence="1">
    <location>
        <position position="10"/>
    </location>
</feature>
<feature type="modified residue" description="4-hydroxyproline" evidence="1">
    <location>
        <position position="13"/>
    </location>
</feature>
<feature type="modified residue" description="4-hydroxyproline" evidence="1">
    <location>
        <position position="35"/>
    </location>
</feature>
<feature type="modified residue" description="4-hydroxyproline" evidence="1">
    <location>
        <position position="41"/>
    </location>
</feature>
<feature type="modified residue" description="5-hydroxylysine; alternate" evidence="1">
    <location>
        <position position="106"/>
    </location>
</feature>
<feature type="modified residue" description="4-hydroxyproline" evidence="1">
    <location>
        <position position="367"/>
    </location>
</feature>
<feature type="modified residue" description="4-hydroxyproline" evidence="1">
    <location>
        <position position="370"/>
    </location>
</feature>
<feature type="glycosylation site" description="O-linked (Gal...) hydroxylysine; alternate" evidence="1">
    <location>
        <position position="106"/>
    </location>
</feature>
<feature type="unsure residue" description="L or I" evidence="4">
    <location>
        <position position="9"/>
    </location>
</feature>
<feature type="unsure residue" description="L or I" evidence="4">
    <location>
        <position position="21"/>
    </location>
</feature>
<feature type="unsure residue" description="L or I" evidence="4">
    <location>
        <position position="28"/>
    </location>
</feature>
<feature type="unsure residue" description="L or I" evidence="4">
    <location>
        <position position="102"/>
    </location>
</feature>
<feature type="unsure residue" description="I or L" evidence="4">
    <location>
        <position position="108"/>
    </location>
</feature>
<feature type="unsure residue" description="L or I" evidence="4">
    <location>
        <position position="114"/>
    </location>
</feature>
<feature type="unsure residue" description="L or I" evidence="4">
    <location>
        <position position="117"/>
    </location>
</feature>
<feature type="unsure residue" description="L or I" evidence="4">
    <location>
        <position position="147"/>
    </location>
</feature>
<feature type="unsure residue" description="I or L" evidence="4">
    <location>
        <position position="177"/>
    </location>
</feature>
<feature type="unsure residue" description="L or I" evidence="4">
    <location>
        <position position="195"/>
    </location>
</feature>
<feature type="unsure residue" description="L or I" evidence="4">
    <location>
        <position position="215"/>
    </location>
</feature>
<feature type="unsure residue" description="L or I" evidence="4">
    <location>
        <position position="233"/>
    </location>
</feature>
<feature type="unsure residue" description="L or I" evidence="4">
    <location>
        <position position="241"/>
    </location>
</feature>
<feature type="unsure residue" description="L or I" evidence="4">
    <location>
        <position position="250"/>
    </location>
</feature>
<feature type="unsure residue" description="I or L" evidence="4">
    <location>
        <position position="256"/>
    </location>
</feature>
<feature type="unsure residue" description="L or I" evidence="4">
    <location>
        <position position="271"/>
    </location>
</feature>
<feature type="unsure residue" description="L or I" evidence="4">
    <location>
        <position position="324"/>
    </location>
</feature>
<feature type="unsure residue" description="L or I" evidence="4">
    <location>
        <position position="333"/>
    </location>
</feature>
<feature type="unsure residue" description="I or L" evidence="4">
    <location>
        <position position="343"/>
    </location>
</feature>
<feature type="unsure residue" description="L or I" evidence="4">
    <location>
        <position position="372"/>
    </location>
</feature>
<feature type="unsure residue" description="L or I" evidence="4">
    <location>
        <position position="378"/>
    </location>
</feature>
<feature type="unsure residue" description="L or I" evidence="4">
    <location>
        <position position="396"/>
    </location>
</feature>
<feature type="unsure residue" description="I or L" evidence="4">
    <location>
        <position position="399"/>
    </location>
</feature>
<feature type="unsure residue" description="I or L" evidence="4">
    <location>
        <position position="406"/>
    </location>
</feature>
<feature type="unsure residue" description="I or L" evidence="4">
    <location>
        <position position="418"/>
    </location>
</feature>
<feature type="unsure residue" description="L or I" evidence="4">
    <location>
        <position position="441"/>
    </location>
</feature>
<feature type="unsure residue" description="L or I" evidence="4">
    <location>
        <position position="462"/>
    </location>
</feature>
<feature type="unsure residue" description="L or I" evidence="4">
    <location>
        <position position="483"/>
    </location>
</feature>
<feature type="unsure residue" description="I or L" evidence="4">
    <location>
        <position position="501"/>
    </location>
</feature>
<feature type="unsure residue" description="L or I" evidence="4">
    <location>
        <position position="507"/>
    </location>
</feature>
<feature type="unsure residue" description="I or L" evidence="4">
    <location>
        <position position="532"/>
    </location>
</feature>
<feature type="unsure residue" description="I or L" evidence="4">
    <location>
        <position position="575"/>
    </location>
</feature>
<feature type="unsure residue" description="L or I" evidence="4">
    <location>
        <position position="587"/>
    </location>
</feature>
<feature type="unsure residue" description="I or L" evidence="4">
    <location>
        <position position="677"/>
    </location>
</feature>
<feature type="unsure residue" description="I or L" evidence="4">
    <location>
        <position position="728"/>
    </location>
</feature>
<feature type="unsure residue" description="L or I" evidence="4">
    <location>
        <position position="743"/>
    </location>
</feature>
<feature type="unsure residue" description="L or I" evidence="4">
    <location>
        <position position="791"/>
    </location>
</feature>
<feature type="unsure residue" description="L or I" evidence="4">
    <location>
        <position position="792"/>
    </location>
</feature>
<feature type="unsure residue" description="I or L" evidence="4">
    <location>
        <position position="797"/>
    </location>
</feature>
<feature type="unsure residue" description="L or I" evidence="4">
    <location>
        <position position="798"/>
    </location>
</feature>
<feature type="unsure residue" description="L or I" evidence="4">
    <location>
        <position position="800"/>
    </location>
</feature>
<feature type="unsure residue" description="L or I" evidence="4">
    <location>
        <position position="809"/>
    </location>
</feature>
<feature type="unsure residue" description="L or I" evidence="4">
    <location>
        <position position="822"/>
    </location>
</feature>
<feature type="unsure residue" description="I or L" evidence="4">
    <location>
        <position position="824"/>
    </location>
</feature>
<feature type="unsure residue" description="L or I" evidence="4">
    <location>
        <position position="834"/>
    </location>
</feature>
<feature type="unsure residue" description="L or I" evidence="4">
    <location>
        <position position="885"/>
    </location>
</feature>
<feature type="unsure residue" description="I or L" evidence="4">
    <location>
        <position position="896"/>
    </location>
</feature>
<feature type="unsure residue" description="L or I" evidence="4">
    <location>
        <position position="911"/>
    </location>
</feature>
<feature type="unsure residue" description="L or I" evidence="4">
    <location>
        <position position="914"/>
    </location>
</feature>
<feature type="unsure residue" description="L or I" evidence="4">
    <location>
        <position position="920"/>
    </location>
</feature>
<feature type="unsure residue" description="L or I" evidence="4">
    <location>
        <position position="923"/>
    </location>
</feature>
<feature type="unsure residue" description="L or I" evidence="4">
    <location>
        <position position="926"/>
    </location>
</feature>
<feature type="unsure residue" description="I or L" evidence="4">
    <location>
        <position position="971"/>
    </location>
</feature>
<feature type="non-consecutive residues" evidence="4">
    <location>
        <begin position="17"/>
        <end position="18"/>
    </location>
</feature>
<feature type="non-consecutive residues" evidence="4">
    <location>
        <begin position="75"/>
        <end position="76"/>
    </location>
</feature>
<feature type="non-consecutive residues" evidence="4">
    <location>
        <begin position="161"/>
        <end position="162"/>
    </location>
</feature>
<feature type="non-consecutive residues" evidence="4">
    <location>
        <begin position="235"/>
        <end position="236"/>
    </location>
</feature>
<feature type="non-consecutive residues" evidence="4">
    <location>
        <begin position="309"/>
        <end position="310"/>
    </location>
</feature>
<feature type="non-consecutive residues" evidence="4">
    <location>
        <begin position="566"/>
        <end position="567"/>
    </location>
</feature>
<feature type="non-consecutive residues" evidence="4">
    <location>
        <begin position="824"/>
        <end position="825"/>
    </location>
</feature>
<feature type="non-consecutive residues" evidence="4">
    <location>
        <begin position="831"/>
        <end position="832"/>
    </location>
</feature>
<feature type="non-consecutive residues" evidence="4">
    <location>
        <begin position="860"/>
        <end position="861"/>
    </location>
</feature>
<feature type="non-terminal residue" evidence="4">
    <location>
        <position position="1"/>
    </location>
</feature>
<feature type="non-terminal residue" evidence="4">
    <location>
        <position position="1011"/>
    </location>
</feature>
<keyword id="KW-0903">Direct protein sequencing</keyword>
<keyword id="KW-0952">Extinct organism protein</keyword>
<keyword id="KW-0272">Extracellular matrix</keyword>
<keyword id="KW-0325">Glycoprotein</keyword>
<keyword id="KW-0379">Hydroxylation</keyword>
<keyword id="KW-0964">Secreted</keyword>
<comment type="function">
    <text evidence="5">Type I collagen is a member of group I collagen (fibrillar forming collagen).</text>
</comment>
<comment type="subunit">
    <text evidence="1">Trimers of one alpha 2(I) and two alpha 1(I) chains. Interacts (via C-terminus) with TMEM131 (via PapD-L domain); the interaction is direct and is involved in assembly and TRAPPIII ER-to-Golgi transport complex-dependent secretion of collagen.</text>
</comment>
<comment type="subcellular location">
    <subcellularLocation>
        <location>Secreted</location>
    </subcellularLocation>
    <subcellularLocation>
        <location>Secreted</location>
        <location>Extracellular space</location>
    </subcellularLocation>
    <subcellularLocation>
        <location evidence="5">Secreted</location>
        <location evidence="5">Extracellular space</location>
        <location evidence="5">Extracellular matrix</location>
    </subcellularLocation>
</comment>
<comment type="tissue specificity">
    <text evidence="3">Expressed in bones.</text>
</comment>
<comment type="PTM">
    <text evidence="1">Prolines at the third position of the tripeptide repeating unit (G-X-Y) are hydroxylated in some or all of the chains.</text>
</comment>
<comment type="miscellaneous">
    <text evidence="3">These protein fragments were extracted from an ancient bone collected in Haiti.</text>
</comment>
<comment type="similarity">
    <text evidence="5">Belongs to the fibrillar collagen family.</text>
</comment>
<organism evidence="4">
    <name type="scientific">Neocnus comes</name>
    <name type="common">Miller's Hispaniolan ground sloth</name>
    <name type="synonym">Synocnus comes</name>
    <dbReference type="NCBI Taxonomy" id="2546658"/>
    <lineage>
        <taxon>Eukaryota</taxon>
        <taxon>Metazoa</taxon>
        <taxon>Chordata</taxon>
        <taxon>Craniata</taxon>
        <taxon>Vertebrata</taxon>
        <taxon>Euteleostomi</taxon>
        <taxon>Mammalia</taxon>
        <taxon>Eutheria</taxon>
        <taxon>Xenarthra</taxon>
        <taxon>Pilosa</taxon>
        <taxon>Folivora</taxon>
        <taxon>Megalonychidae</taxon>
        <taxon>Neocnus</taxon>
    </lineage>
</organism>
<reference evidence="5" key="1">
    <citation type="journal article" date="2019" name="Nat. Ecol. Evol.">
        <title>Palaeoproteomics resolves sloth relationships.</title>
        <authorList>
            <person name="Presslee S."/>
            <person name="Slater G.J."/>
            <person name="Pujos F."/>
            <person name="Forasiepi A.M."/>
            <person name="Fischer R."/>
            <person name="Molloy K."/>
            <person name="Mackie M."/>
            <person name="Olsen J.V."/>
            <person name="Kramarz A."/>
            <person name="Taglioretti M."/>
            <person name="Scaglia F."/>
            <person name="Lezcano M."/>
            <person name="Lanata J.L."/>
            <person name="Southon J."/>
            <person name="Feranec R."/>
            <person name="Bloch J."/>
            <person name="Hajduk A."/>
            <person name="Martin F.M."/>
            <person name="Salas Gismondi R."/>
            <person name="Reguero M."/>
            <person name="de Muizon C."/>
            <person name="Greenwood A."/>
            <person name="Chait B.T."/>
            <person name="Penkman K."/>
            <person name="Collins M."/>
            <person name="MacPhee R.D.E."/>
        </authorList>
    </citation>
    <scope>PROTEIN SEQUENCE</scope>
    <scope>TISSUE SPECIFICITY</scope>
    <scope>IDENTIFICATION BY MASS SPECTROMETRY</scope>
    <source>
        <tissue evidence="4">Bone</tissue>
    </source>
</reference>
<evidence type="ECO:0000250" key="1">
    <source>
        <dbReference type="UniProtKB" id="P08123"/>
    </source>
</evidence>
<evidence type="ECO:0000256" key="2">
    <source>
        <dbReference type="SAM" id="MobiDB-lite"/>
    </source>
</evidence>
<evidence type="ECO:0000269" key="3">
    <source>
    </source>
</evidence>
<evidence type="ECO:0000303" key="4">
    <source>
    </source>
</evidence>
<evidence type="ECO:0000305" key="5"/>
<name>CO1A2_NEOCO</name>
<proteinExistence type="evidence at protein level"/>
<sequence length="1011" mass="90758">SGGFDFSFLPQPPQEKAGVGLGPGPMGLMGPRGPPGASGAPGPQGFQGPAGEPGEPGQTGPAGARGPAGPPGKAGPGKPGRPGERGVVGPQGARGFPGTPGLPGFKGIRGHNGLDGLKGQPGAPGVKGEPGAPGENGTPGQTGARGLPGERGRVGAPGPAGRGSDGSVGPVGPAGPIGSAGPPGFPGAPGPKGELGPVGNTGPAGPAGPRGEQGLPGVSGPVGPPGNPGANGLTGKGAAGLPGVAGAPGLPGPRGIPGPVGASGATGARGLVGEPGPAGSKGESGGKGEPGSAGPQGPPGSSGEEGKRGNGEAGSTGPTGPPGLRGGPGSRGLPGADGRAGVIGPAGARGASGPAGVRGPSGDTGRPGEPGLMGARGLPGSPGNVGPAGKEGPVGLPGIDGRPGPIGPAGARGEAGNIGFPGPKGPAGDPGKGGEKGHAGLAGNRGAPGPDGNNGAQGPPGLQGVQGGKGEQGPAGPPGFQGLPGPAGTTGEAGKPGERGIPGEFGLPGPAGPRGERGPPGESGAVGPSGAIGSRGPSGPPGPDGNKGEPGVVGAPGTAGPAGSGGPGERGAAGIPGGKGEKGETGLRGEVGTTGRDGARGAPGAVGAPGPAGATGDRGEAGAAGPAGPAGPRGSPGERGEVGPAGPNGFAGPAGAAGQPGAKGERGTKGPKGENGIVGPTGPVGSAGPAGPNGPAGPAGSRGDGGPPGVTGFPGAAGRTGPPGPSGITGPPGPPGAAGKEGLRGPRGDQGPVGRTGETGAGGPPGFTGEKGPSGEPGTAGPPGTAGPQGLLGAPGILGLPGSRGERGLPGVAGAVGEPGPLGIGPPGARGDGLPGHKGERGYAGNAGPVGAAGAPGPHGVGPAGKHGNRGEPGPVGSVGPVGALGPRGPSGPQGIRGDKGEPGEKGPRGLPGLKGHNGLQGLPGLAGQHGDQGSPGPVGPAGPRGPAGPSGPPGKDGRTGHPGAVGPAGIRGSQGSQGPSGPPGPPGPPGPPGASGGGYDFGYEGDFYRA</sequence>
<dbReference type="GO" id="GO:0031012">
    <property type="term" value="C:extracellular matrix"/>
    <property type="evidence" value="ECO:0007669"/>
    <property type="project" value="TreeGrafter"/>
</dbReference>
<dbReference type="GO" id="GO:0005615">
    <property type="term" value="C:extracellular space"/>
    <property type="evidence" value="ECO:0007669"/>
    <property type="project" value="TreeGrafter"/>
</dbReference>
<dbReference type="InterPro" id="IPR008160">
    <property type="entry name" value="Collagen"/>
</dbReference>
<dbReference type="InterPro" id="IPR050149">
    <property type="entry name" value="Collagen_superfamily"/>
</dbReference>
<dbReference type="PANTHER" id="PTHR24023">
    <property type="entry name" value="COLLAGEN ALPHA"/>
    <property type="match status" value="1"/>
</dbReference>
<dbReference type="PANTHER" id="PTHR24023:SF1082">
    <property type="entry name" value="COLLAGEN TRIPLE HELIX REPEAT"/>
    <property type="match status" value="1"/>
</dbReference>
<dbReference type="Pfam" id="PF01391">
    <property type="entry name" value="Collagen"/>
    <property type="match status" value="7"/>
</dbReference>